<accession>Q107X0</accession>
<protein>
    <recommendedName>
        <fullName>Putative protein KRIP1</fullName>
    </recommendedName>
    <alternativeName>
        <fullName>Kallikrein-related in prostate protein 1</fullName>
    </alternativeName>
    <alternativeName>
        <fullName>Kallikrein-related mRNA protein</fullName>
        <shortName>KARMA</shortName>
    </alternativeName>
</protein>
<proteinExistence type="uncertain"/>
<reference key="1">
    <citation type="journal article" date="2006" name="Prostate">
        <title>KLK31P is a novel androgen regulated and transcribed pseudogene of kallikreins that is expressed at lower levels in prostate cancer cells than in normal prostate cells.</title>
        <authorList>
            <person name="Lu W."/>
            <person name="Zhou D."/>
            <person name="Glusman G."/>
            <person name="Utleg A.G."/>
            <person name="White J.T."/>
            <person name="Nelson P.S."/>
            <person name="Vasicek T.J."/>
            <person name="Hood L."/>
            <person name="Lin B."/>
        </authorList>
    </citation>
    <scope>NUCLEOTIDE SEQUENCE [MRNA]</scope>
</reference>
<reference key="2">
    <citation type="journal article" date="2008" name="Prostate">
        <title>A novel transcript from the KLKP1 gene is androgen regulated, down-regulated during prostate cancer progression and encodes the first non-serine protease identified from the human kallikrein gene locus.</title>
        <authorList>
            <person name="Kaushal A."/>
            <person name="Myers S.A."/>
            <person name="Dong Y."/>
            <person name="Lai J."/>
            <person name="Tan O.L."/>
            <person name="Bui L.T."/>
            <person name="Hunt M.L."/>
            <person name="Digby M.R."/>
            <person name="Samaratunga H."/>
            <person name="Gardiner R.A."/>
            <person name="Clements J.A."/>
            <person name="Hooper J.D."/>
        </authorList>
    </citation>
    <scope>NUCLEOTIDE SEQUENCE [GENOMIC DNA / MRNA]</scope>
    <scope>SUBCELLULAR LOCATION</scope>
    <scope>INDUCTION</scope>
    <scope>TISSUE SPECIFICITY</scope>
</reference>
<name>KRIP1_HUMAN</name>
<evidence type="ECO:0000256" key="1">
    <source>
        <dbReference type="SAM" id="MobiDB-lite"/>
    </source>
</evidence>
<evidence type="ECO:0000269" key="2">
    <source>
    </source>
</evidence>
<evidence type="ECO:0000305" key="3"/>
<evidence type="ECO:0000305" key="4">
    <source>
    </source>
</evidence>
<gene>
    <name type="primary">KLKP1</name>
    <name type="synonym">KLK31P</name>
</gene>
<feature type="chain" id="PRO_0000341220" description="Putative protein KRIP1">
    <location>
        <begin position="1"/>
        <end position="134"/>
    </location>
</feature>
<feature type="region of interest" description="Disordered" evidence="1">
    <location>
        <begin position="1"/>
        <end position="134"/>
    </location>
</feature>
<feature type="compositionally biased region" description="Polar residues" evidence="1">
    <location>
        <begin position="9"/>
        <end position="24"/>
    </location>
</feature>
<feature type="compositionally biased region" description="Polar residues" evidence="1">
    <location>
        <begin position="43"/>
        <end position="55"/>
    </location>
</feature>
<feature type="compositionally biased region" description="Polar residues" evidence="1">
    <location>
        <begin position="64"/>
        <end position="79"/>
    </location>
</feature>
<feature type="compositionally biased region" description="Pro residues" evidence="1">
    <location>
        <begin position="119"/>
        <end position="128"/>
    </location>
</feature>
<organism>
    <name type="scientific">Homo sapiens</name>
    <name type="common">Human</name>
    <dbReference type="NCBI Taxonomy" id="9606"/>
    <lineage>
        <taxon>Eukaryota</taxon>
        <taxon>Metazoa</taxon>
        <taxon>Chordata</taxon>
        <taxon>Craniata</taxon>
        <taxon>Vertebrata</taxon>
        <taxon>Euteleostomi</taxon>
        <taxon>Mammalia</taxon>
        <taxon>Eutheria</taxon>
        <taxon>Euarchontoglires</taxon>
        <taxon>Primates</taxon>
        <taxon>Haplorrhini</taxon>
        <taxon>Catarrhini</taxon>
        <taxon>Hominidae</taxon>
        <taxon>Homo</taxon>
    </lineage>
</organism>
<sequence>MSPVHRSRTSQTQEAHKPTSTLSFISPPQPPRQDPKSPHILCSQPNACSRQSHVSYPNPWGLPCSQSKVSPPGTATNPNPKEWSRISGPPVSLDPQPWSSAPFKPTAQLPLLAQSLGPPAKPALPDPALPLQML</sequence>
<comment type="subcellular location">
    <subcellularLocation>
        <location evidence="2">Cytoplasm</location>
    </subcellularLocation>
    <subcellularLocation>
        <location evidence="2">Nucleus</location>
    </subcellularLocation>
</comment>
<comment type="tissue specificity">
    <text evidence="2">Abundant expression is found in prostate, restricted to cells of epithelial origin in normal and diseased glands. Very low expression is detected in pancreas and ovary.</text>
</comment>
<comment type="induction">
    <text evidence="2">By androgens.</text>
</comment>
<comment type="caution">
    <text evidence="4">Was named (PubMed:18196551) 'Kallikrein-related in prostate protein 1' because this protein is encoded by a transcript from the KLKP1 gene region. It is encoded in an exon which is similar to the intronic region between exons 1 and 2 of KLK1, KLK2 and KLK3.</text>
</comment>
<comment type="caution">
    <text evidence="3">Could be the product of a pseudogene.</text>
</comment>
<keyword id="KW-0963">Cytoplasm</keyword>
<keyword id="KW-0539">Nucleus</keyword>
<keyword id="KW-1185">Reference proteome</keyword>
<dbReference type="EMBL" id="DQ211698">
    <property type="status" value="NOT_ANNOTATED_CDS"/>
    <property type="molecule type" value="mRNA"/>
</dbReference>
<dbReference type="EMBL" id="DQ086829">
    <property type="protein sequence ID" value="AAZ78651.1"/>
    <property type="molecule type" value="mRNA"/>
</dbReference>
<dbReference type="EMBL" id="DQ086830">
    <property type="protein sequence ID" value="AAZ78652.1"/>
    <property type="molecule type" value="Genomic_DNA"/>
</dbReference>
<dbReference type="BioMuta" id="HGNC:21260"/>
<dbReference type="MassIVE" id="Q107X0"/>
<dbReference type="AGR" id="HGNC:21260"/>
<dbReference type="GeneCards" id="KLKP1"/>
<dbReference type="HGNC" id="HGNC:21260">
    <property type="gene designation" value="KLKP1"/>
</dbReference>
<dbReference type="neXtProt" id="NX_Q107X0"/>
<dbReference type="InParanoid" id="Q107X0"/>
<dbReference type="PAN-GO" id="Q107X0">
    <property type="GO annotations" value="0 GO annotations based on evolutionary models"/>
</dbReference>
<dbReference type="Pharos" id="Q107X0">
    <property type="development level" value="Tdark"/>
</dbReference>
<dbReference type="PRO" id="PR:Q107X0"/>
<dbReference type="Proteomes" id="UP000005640">
    <property type="component" value="Unplaced"/>
</dbReference>
<dbReference type="RNAct" id="Q107X0">
    <property type="molecule type" value="protein"/>
</dbReference>
<dbReference type="GO" id="GO:0005737">
    <property type="term" value="C:cytoplasm"/>
    <property type="evidence" value="ECO:0007669"/>
    <property type="project" value="UniProtKB-SubCell"/>
</dbReference>
<dbReference type="GO" id="GO:0005634">
    <property type="term" value="C:nucleus"/>
    <property type="evidence" value="ECO:0007669"/>
    <property type="project" value="UniProtKB-SubCell"/>
</dbReference>